<feature type="signal peptide" evidence="2 4">
    <location>
        <begin position="1"/>
        <end position="22"/>
    </location>
</feature>
<feature type="chain" id="PRO_0000006527" description="Cytochrome c-551" evidence="3">
    <location>
        <begin position="23"/>
        <end position="104"/>
    </location>
</feature>
<feature type="binding site" description="covalent">
    <location>
        <position position="34"/>
    </location>
    <ligand>
        <name>heme c</name>
        <dbReference type="ChEBI" id="CHEBI:61717"/>
    </ligand>
</feature>
<feature type="binding site" description="covalent">
    <location>
        <position position="37"/>
    </location>
    <ligand>
        <name>heme c</name>
        <dbReference type="ChEBI" id="CHEBI:61717"/>
    </ligand>
</feature>
<feature type="binding site" description="axial binding residue" evidence="1 5">
    <location>
        <position position="38"/>
    </location>
    <ligand>
        <name>heme c</name>
        <dbReference type="ChEBI" id="CHEBI:61717"/>
    </ligand>
    <ligandPart>
        <name>Fe</name>
        <dbReference type="ChEBI" id="CHEBI:18248"/>
    </ligandPart>
</feature>
<feature type="binding site" description="axial binding residue" evidence="1 5">
    <location>
        <position position="83"/>
    </location>
    <ligand>
        <name>heme c</name>
        <dbReference type="ChEBI" id="CHEBI:61717"/>
    </ligand>
    <ligandPart>
        <name>Fe</name>
        <dbReference type="ChEBI" id="CHEBI:18248"/>
    </ligandPart>
</feature>
<feature type="sequence variant" description="In strain: 129/1224.">
    <original>D</original>
    <variation>A</variation>
    <location>
        <position position="24"/>
    </location>
</feature>
<feature type="helix" evidence="7">
    <location>
        <begin position="25"/>
        <end position="31"/>
    </location>
</feature>
<feature type="helix" evidence="7">
    <location>
        <begin position="34"/>
        <end position="36"/>
    </location>
</feature>
<feature type="strand" evidence="6">
    <location>
        <begin position="40"/>
        <end position="46"/>
    </location>
</feature>
<feature type="helix" evidence="7">
    <location>
        <begin position="49"/>
        <end position="56"/>
    </location>
</feature>
<feature type="helix" evidence="7">
    <location>
        <begin position="62"/>
        <end position="72"/>
    </location>
</feature>
<feature type="strand" evidence="7">
    <location>
        <begin position="76"/>
        <end position="81"/>
    </location>
</feature>
<feature type="helix" evidence="7">
    <location>
        <begin position="90"/>
        <end position="101"/>
    </location>
</feature>
<reference key="1">
    <citation type="journal article" date="1990" name="FEBS Lett.">
        <title>The structural gene for cytochrome c551 from Pseudomonas aeruginosa. The nucleotide sequence shows a location downstream of the nitrite reductase gene.</title>
        <authorList>
            <person name="Nordling M."/>
            <person name="Young S."/>
            <person name="Karlsson B.G."/>
            <person name="Lundberg L.G."/>
        </authorList>
    </citation>
    <scope>NUCLEOTIDE SEQUENCE [GENOMIC DNA]</scope>
    <source>
        <strain>ATCC 10145 / DSM 50071 / JCM 5962 / LMG 1242 / NBRC 12689 / NCIMB 8295 / NRRL B-771</strain>
    </source>
</reference>
<reference key="2">
    <citation type="journal article" date="1990" name="FEBS Lett.">
        <title>Cloning and sequencing of the gene encoding cytochrome c-551 from Pseudomonas aeruginosa.</title>
        <authorList>
            <person name="Arai H."/>
            <person name="Sanbongi Y."/>
            <person name="Igarashi Y."/>
            <person name="Kodama T."/>
        </authorList>
    </citation>
    <scope>NUCLEOTIDE SEQUENCE [GENOMIC DNA]</scope>
</reference>
<reference key="3">
    <citation type="journal article" date="2000" name="Nature">
        <title>Complete genome sequence of Pseudomonas aeruginosa PAO1, an opportunistic pathogen.</title>
        <authorList>
            <person name="Stover C.K."/>
            <person name="Pham X.-Q.T."/>
            <person name="Erwin A.L."/>
            <person name="Mizoguchi S.D."/>
            <person name="Warrener P."/>
            <person name="Hickey M.J."/>
            <person name="Brinkman F.S.L."/>
            <person name="Hufnagle W.O."/>
            <person name="Kowalik D.J."/>
            <person name="Lagrou M."/>
            <person name="Garber R.L."/>
            <person name="Goltry L."/>
            <person name="Tolentino E."/>
            <person name="Westbrock-Wadman S."/>
            <person name="Yuan Y."/>
            <person name="Brody L.L."/>
            <person name="Coulter S.N."/>
            <person name="Folger K.R."/>
            <person name="Kas A."/>
            <person name="Larbig K."/>
            <person name="Lim R.M."/>
            <person name="Smith K.A."/>
            <person name="Spencer D.H."/>
            <person name="Wong G.K.-S."/>
            <person name="Wu Z."/>
            <person name="Paulsen I.T."/>
            <person name="Reizer J."/>
            <person name="Saier M.H. Jr."/>
            <person name="Hancock R.E.W."/>
            <person name="Lory S."/>
            <person name="Olson M.V."/>
        </authorList>
    </citation>
    <scope>NUCLEOTIDE SEQUENCE [LARGE SCALE GENOMIC DNA]</scope>
    <source>
        <strain>ATCC 15692 / DSM 22644 / CIP 104116 / JCM 14847 / LMG 12228 / 1C / PRS 101 / PAO1</strain>
    </source>
</reference>
<reference key="4">
    <citation type="journal article" date="1963" name="Biochem. J.">
        <title>The amino acid sequence of Pseudomonas cytochrome c-551.</title>
        <authorList>
            <person name="Ambler R.P."/>
        </authorList>
    </citation>
    <scope>PROTEIN SEQUENCE OF 23-104</scope>
    <source>
        <strain>P6009</strain>
    </source>
</reference>
<reference key="5">
    <citation type="journal article" date="1974" name="Biochem. J.">
        <title>The evolutionary stability of cytochrome c-551 in Pseudomonas aeruginosa and Pseudomonas fluorescens biotype C.</title>
        <authorList>
            <person name="Ambler R.P."/>
        </authorList>
    </citation>
    <scope>PROTEIN SEQUENCE OF 23-104</scope>
    <source>
        <strain>Various strains</strain>
    </source>
</reference>
<reference key="6">
    <citation type="journal article" date="1982" name="J. Mol. Biol.">
        <title>Structure of cytochrome c551 from Pseudomonas aeruginosa refined at 1.6-A resolution and comparison of the two redox forms.</title>
        <authorList>
            <person name="Matsuura Y."/>
            <person name="Takano T."/>
            <person name="Dickerson R.E."/>
        </authorList>
    </citation>
    <scope>X-RAY CRYSTALLOGRAPHY (1.6 ANGSTROMS)</scope>
</reference>
<reference key="7">
    <citation type="journal article" date="1978" name="Proc. Natl. Acad. Sci. U.S.A.">
        <title>Pseudomonas cytochrome c551 at 2.0-A resolution: enlargement of the cytochrome c family.</title>
        <authorList>
            <person name="Almassy R.J."/>
            <person name="Dickerson R.E."/>
        </authorList>
    </citation>
    <scope>X-RAY CRYSTALLOGRAPHY (2.0 ANGSTROMS)</scope>
</reference>
<reference key="8">
    <citation type="journal article" date="1990" name="Biochemistry">
        <title>Sequential 1H NMR assignments of iron(II) cytochrome c551 from Pseudomonas aeruginosa.</title>
        <authorList>
            <person name="Detlefsen D.J."/>
            <person name="Thanabal V."/>
            <person name="Pecoraro V.L."/>
            <person name="Wagner G."/>
        </authorList>
    </citation>
    <scope>STRUCTURE BY NMR</scope>
</reference>
<reference key="9">
    <citation type="journal article" date="1991" name="Biochemistry">
        <title>Solution structure of Fe(II) cytochrome c551 from Pseudomonas aeruginosa as determined by two-dimensional 1H NMR.</title>
        <authorList>
            <person name="Detlefsen D.J."/>
            <person name="Thanabal V."/>
            <person name="Pecoraro V.L."/>
            <person name="Wagner G."/>
        </authorList>
    </citation>
    <scope>STRUCTURE BY NMR</scope>
</reference>
<reference key="10">
    <citation type="journal article" date="1993" name="Biochemistry">
        <title>Investigation of the structure of oxidized Pseudomonas aeruginosa cytochrome c-551 by NMR: comparison of observed paramagnetic shifts and calculated pseudocontact shifts.</title>
        <authorList>
            <person name="Timkovich R."/>
            <person name="Cai M."/>
        </authorList>
    </citation>
    <scope>STRUCTURE BY NMR</scope>
</reference>
<dbReference type="EMBL" id="X51319">
    <property type="protein sequence ID" value="CAA35703.1"/>
    <property type="molecule type" value="Genomic_DNA"/>
</dbReference>
<dbReference type="EMBL" id="X51631">
    <property type="protein sequence ID" value="CAA35958.1"/>
    <property type="molecule type" value="Genomic_DNA"/>
</dbReference>
<dbReference type="EMBL" id="AE004091">
    <property type="protein sequence ID" value="AAG03907.1"/>
    <property type="molecule type" value="Genomic_DNA"/>
</dbReference>
<dbReference type="PIR" id="B34141">
    <property type="entry name" value="CCPS5A"/>
</dbReference>
<dbReference type="RefSeq" id="NP_249209.1">
    <property type="nucleotide sequence ID" value="NC_002516.2"/>
</dbReference>
<dbReference type="RefSeq" id="WP_003084872.1">
    <property type="nucleotide sequence ID" value="NZ_QZGE01000010.1"/>
</dbReference>
<dbReference type="PDB" id="1DVV">
    <property type="method" value="NMR"/>
    <property type="chains" value="A=23-104"/>
</dbReference>
<dbReference type="PDB" id="2EXV">
    <property type="method" value="X-ray"/>
    <property type="resolution" value="1.86 A"/>
    <property type="chains" value="A/C=23-104"/>
</dbReference>
<dbReference type="PDB" id="2PAC">
    <property type="method" value="NMR"/>
    <property type="chains" value="A=23-104"/>
</dbReference>
<dbReference type="PDB" id="351C">
    <property type="method" value="X-ray"/>
    <property type="resolution" value="1.60 A"/>
    <property type="chains" value="A=23-104"/>
</dbReference>
<dbReference type="PDB" id="3X39">
    <property type="method" value="X-ray"/>
    <property type="resolution" value="1.50 A"/>
    <property type="chains" value="A/B=23-104"/>
</dbReference>
<dbReference type="PDB" id="451C">
    <property type="method" value="X-ray"/>
    <property type="resolution" value="1.60 A"/>
    <property type="chains" value="A=23-104"/>
</dbReference>
<dbReference type="PDB" id="5XEC">
    <property type="method" value="X-ray"/>
    <property type="resolution" value="1.10 A"/>
    <property type="chains" value="A=23-42, C=43-104"/>
</dbReference>
<dbReference type="PDB" id="5XED">
    <property type="method" value="X-ray"/>
    <property type="resolution" value="1.55 A"/>
    <property type="chains" value="A=23-42, C=43-104"/>
</dbReference>
<dbReference type="PDBsum" id="1DVV"/>
<dbReference type="PDBsum" id="2EXV"/>
<dbReference type="PDBsum" id="2PAC"/>
<dbReference type="PDBsum" id="351C"/>
<dbReference type="PDBsum" id="3X39"/>
<dbReference type="PDBsum" id="451C"/>
<dbReference type="PDBsum" id="5XEC"/>
<dbReference type="PDBsum" id="5XED"/>
<dbReference type="BMRB" id="P00099"/>
<dbReference type="SMR" id="P00099"/>
<dbReference type="STRING" id="208964.PA0518"/>
<dbReference type="PaxDb" id="208964-PA0518"/>
<dbReference type="DNASU" id="882220"/>
<dbReference type="GeneID" id="882220"/>
<dbReference type="KEGG" id="pae:PA0518"/>
<dbReference type="PATRIC" id="fig|208964.12.peg.548"/>
<dbReference type="PseudoCAP" id="PA0518"/>
<dbReference type="HOGENOM" id="CLU_133112_1_0_6"/>
<dbReference type="InParanoid" id="P00099"/>
<dbReference type="OrthoDB" id="9814063at2"/>
<dbReference type="BioCyc" id="PAER208964:G1FZ6-523-MONOMER"/>
<dbReference type="EvolutionaryTrace" id="P00099"/>
<dbReference type="Proteomes" id="UP000002438">
    <property type="component" value="Chromosome"/>
</dbReference>
<dbReference type="GO" id="GO:0042597">
    <property type="term" value="C:periplasmic space"/>
    <property type="evidence" value="ECO:0007669"/>
    <property type="project" value="UniProtKB-SubCell"/>
</dbReference>
<dbReference type="GO" id="GO:0009055">
    <property type="term" value="F:electron transfer activity"/>
    <property type="evidence" value="ECO:0007669"/>
    <property type="project" value="InterPro"/>
</dbReference>
<dbReference type="GO" id="GO:0020037">
    <property type="term" value="F:heme binding"/>
    <property type="evidence" value="ECO:0007669"/>
    <property type="project" value="InterPro"/>
</dbReference>
<dbReference type="GO" id="GO:0005506">
    <property type="term" value="F:iron ion binding"/>
    <property type="evidence" value="ECO:0007669"/>
    <property type="project" value="InterPro"/>
</dbReference>
<dbReference type="Gene3D" id="1.10.760.10">
    <property type="entry name" value="Cytochrome c-like domain"/>
    <property type="match status" value="1"/>
</dbReference>
<dbReference type="InterPro" id="IPR009056">
    <property type="entry name" value="Cyt_c-like_dom"/>
</dbReference>
<dbReference type="InterPro" id="IPR036909">
    <property type="entry name" value="Cyt_c-like_dom_sf"/>
</dbReference>
<dbReference type="InterPro" id="IPR002324">
    <property type="entry name" value="Cyt_c_ID"/>
</dbReference>
<dbReference type="Pfam" id="PF00034">
    <property type="entry name" value="Cytochrom_C"/>
    <property type="match status" value="1"/>
</dbReference>
<dbReference type="PRINTS" id="PR00606">
    <property type="entry name" value="CYTCHROMECID"/>
</dbReference>
<dbReference type="SUPFAM" id="SSF46626">
    <property type="entry name" value="Cytochrome c"/>
    <property type="match status" value="1"/>
</dbReference>
<dbReference type="PROSITE" id="PS51007">
    <property type="entry name" value="CYTC"/>
    <property type="match status" value="1"/>
</dbReference>
<gene>
    <name type="primary">nirM</name>
    <name type="ordered locus">PA0518</name>
</gene>
<organism>
    <name type="scientific">Pseudomonas aeruginosa (strain ATCC 15692 / DSM 22644 / CIP 104116 / JCM 14847 / LMG 12228 / 1C / PRS 101 / PAO1)</name>
    <dbReference type="NCBI Taxonomy" id="208964"/>
    <lineage>
        <taxon>Bacteria</taxon>
        <taxon>Pseudomonadati</taxon>
        <taxon>Pseudomonadota</taxon>
        <taxon>Gammaproteobacteria</taxon>
        <taxon>Pseudomonadales</taxon>
        <taxon>Pseudomonadaceae</taxon>
        <taxon>Pseudomonas</taxon>
    </lineage>
</organism>
<evidence type="ECO:0000255" key="1">
    <source>
        <dbReference type="PROSITE-ProRule" id="PRU00433"/>
    </source>
</evidence>
<evidence type="ECO:0000269" key="2">
    <source>
    </source>
</evidence>
<evidence type="ECO:0000269" key="3">
    <source>
    </source>
</evidence>
<evidence type="ECO:0000269" key="4">
    <source>
    </source>
</evidence>
<evidence type="ECO:0000269" key="5">
    <source>
    </source>
</evidence>
<evidence type="ECO:0007829" key="6">
    <source>
        <dbReference type="PDB" id="351C"/>
    </source>
</evidence>
<evidence type="ECO:0007829" key="7">
    <source>
        <dbReference type="PDB" id="5XEC"/>
    </source>
</evidence>
<sequence length="104" mass="10967">MKPYALLSLLATGTLLAQGAWAEDPEVLFKNKGCVACHAIDTKMVGPAYKDVAAKFAGQAGAEAELAQRIKNGSQGVWGPIPMPPNAVSDDEAQTLAKWVLSQK</sequence>
<keyword id="KW-0002">3D-structure</keyword>
<keyword id="KW-0903">Direct protein sequencing</keyword>
<keyword id="KW-0249">Electron transport</keyword>
<keyword id="KW-0349">Heme</keyword>
<keyword id="KW-0408">Iron</keyword>
<keyword id="KW-0479">Metal-binding</keyword>
<keyword id="KW-0574">Periplasm</keyword>
<keyword id="KW-1185">Reference proteome</keyword>
<keyword id="KW-0732">Signal</keyword>
<keyword id="KW-0813">Transport</keyword>
<name>CY551_PSEAE</name>
<protein>
    <recommendedName>
        <fullName>Cytochrome c-551</fullName>
    </recommendedName>
    <alternativeName>
        <fullName>Cytochrome C8</fullName>
    </alternativeName>
    <alternativeName>
        <fullName>Cytochrome c551</fullName>
    </alternativeName>
</protein>
<comment type="function">
    <text>Electron donor for cytochrome cd1 in nitrite and nitrate respiration.</text>
</comment>
<comment type="biophysicochemical properties">
    <redoxPotential>
        <text>E(0) is about +260 mV.</text>
    </redoxPotential>
</comment>
<comment type="subcellular location">
    <subcellularLocation>
        <location>Periplasm</location>
    </subcellularLocation>
</comment>
<comment type="PTM">
    <text>Binds 1 heme c group covalently per subunit.</text>
</comment>
<accession>P00099</accession>
<proteinExistence type="evidence at protein level"/>